<organism>
    <name type="scientific">Symbiobacterium thermophilum (strain DSM 24528 / JCM 14929 / IAM 14863 / T)</name>
    <dbReference type="NCBI Taxonomy" id="292459"/>
    <lineage>
        <taxon>Bacteria</taxon>
        <taxon>Bacillati</taxon>
        <taxon>Bacillota</taxon>
        <taxon>Clostridia</taxon>
        <taxon>Eubacteriales</taxon>
        <taxon>Symbiobacteriaceae</taxon>
        <taxon>Symbiobacterium</taxon>
    </lineage>
</organism>
<dbReference type="EC" id="2.6.1.16" evidence="1"/>
<dbReference type="EMBL" id="AP006840">
    <property type="protein sequence ID" value="BAD39181.1"/>
    <property type="molecule type" value="Genomic_DNA"/>
</dbReference>
<dbReference type="RefSeq" id="WP_011194331.1">
    <property type="nucleotide sequence ID" value="NC_006177.1"/>
</dbReference>
<dbReference type="SMR" id="Q67T12"/>
<dbReference type="STRING" id="292459.STH196"/>
<dbReference type="KEGG" id="sth:STH196"/>
<dbReference type="eggNOG" id="COG0449">
    <property type="taxonomic scope" value="Bacteria"/>
</dbReference>
<dbReference type="HOGENOM" id="CLU_012520_5_2_9"/>
<dbReference type="OrthoDB" id="106547at2"/>
<dbReference type="Proteomes" id="UP000000417">
    <property type="component" value="Chromosome"/>
</dbReference>
<dbReference type="GO" id="GO:0005829">
    <property type="term" value="C:cytosol"/>
    <property type="evidence" value="ECO:0007669"/>
    <property type="project" value="TreeGrafter"/>
</dbReference>
<dbReference type="GO" id="GO:0097367">
    <property type="term" value="F:carbohydrate derivative binding"/>
    <property type="evidence" value="ECO:0007669"/>
    <property type="project" value="InterPro"/>
</dbReference>
<dbReference type="GO" id="GO:0004360">
    <property type="term" value="F:glutamine-fructose-6-phosphate transaminase (isomerizing) activity"/>
    <property type="evidence" value="ECO:0007669"/>
    <property type="project" value="UniProtKB-UniRule"/>
</dbReference>
<dbReference type="GO" id="GO:0005975">
    <property type="term" value="P:carbohydrate metabolic process"/>
    <property type="evidence" value="ECO:0007669"/>
    <property type="project" value="UniProtKB-UniRule"/>
</dbReference>
<dbReference type="GO" id="GO:0006002">
    <property type="term" value="P:fructose 6-phosphate metabolic process"/>
    <property type="evidence" value="ECO:0007669"/>
    <property type="project" value="TreeGrafter"/>
</dbReference>
<dbReference type="GO" id="GO:0006487">
    <property type="term" value="P:protein N-linked glycosylation"/>
    <property type="evidence" value="ECO:0007669"/>
    <property type="project" value="TreeGrafter"/>
</dbReference>
<dbReference type="GO" id="GO:0006047">
    <property type="term" value="P:UDP-N-acetylglucosamine metabolic process"/>
    <property type="evidence" value="ECO:0007669"/>
    <property type="project" value="TreeGrafter"/>
</dbReference>
<dbReference type="CDD" id="cd00714">
    <property type="entry name" value="GFAT"/>
    <property type="match status" value="1"/>
</dbReference>
<dbReference type="CDD" id="cd05008">
    <property type="entry name" value="SIS_GlmS_GlmD_1"/>
    <property type="match status" value="1"/>
</dbReference>
<dbReference type="CDD" id="cd05009">
    <property type="entry name" value="SIS_GlmS_GlmD_2"/>
    <property type="match status" value="1"/>
</dbReference>
<dbReference type="FunFam" id="3.40.50.10490:FF:000001">
    <property type="entry name" value="Glutamine--fructose-6-phosphate aminotransferase [isomerizing]"/>
    <property type="match status" value="1"/>
</dbReference>
<dbReference type="FunFam" id="3.40.50.10490:FF:000022">
    <property type="entry name" value="Glutamine--fructose-6-phosphate aminotransferase [isomerizing]"/>
    <property type="match status" value="1"/>
</dbReference>
<dbReference type="FunFam" id="3.60.20.10:FF:000006">
    <property type="entry name" value="Glutamine--fructose-6-phosphate aminotransferase [isomerizing]"/>
    <property type="match status" value="1"/>
</dbReference>
<dbReference type="Gene3D" id="3.40.50.10490">
    <property type="entry name" value="Glucose-6-phosphate isomerase like protein, domain 1"/>
    <property type="match status" value="2"/>
</dbReference>
<dbReference type="Gene3D" id="3.60.20.10">
    <property type="entry name" value="Glutamine Phosphoribosylpyrophosphate, subunit 1, domain 1"/>
    <property type="match status" value="1"/>
</dbReference>
<dbReference type="HAMAP" id="MF_00164">
    <property type="entry name" value="GlmS"/>
    <property type="match status" value="1"/>
</dbReference>
<dbReference type="InterPro" id="IPR017932">
    <property type="entry name" value="GATase_2_dom"/>
</dbReference>
<dbReference type="InterPro" id="IPR005855">
    <property type="entry name" value="GFAT"/>
</dbReference>
<dbReference type="InterPro" id="IPR047084">
    <property type="entry name" value="GFAT_N"/>
</dbReference>
<dbReference type="InterPro" id="IPR035466">
    <property type="entry name" value="GlmS/AgaS_SIS"/>
</dbReference>
<dbReference type="InterPro" id="IPR035490">
    <property type="entry name" value="GlmS/FrlB_SIS"/>
</dbReference>
<dbReference type="InterPro" id="IPR029055">
    <property type="entry name" value="Ntn_hydrolases_N"/>
</dbReference>
<dbReference type="InterPro" id="IPR001347">
    <property type="entry name" value="SIS_dom"/>
</dbReference>
<dbReference type="InterPro" id="IPR046348">
    <property type="entry name" value="SIS_dom_sf"/>
</dbReference>
<dbReference type="NCBIfam" id="TIGR01135">
    <property type="entry name" value="glmS"/>
    <property type="match status" value="1"/>
</dbReference>
<dbReference type="NCBIfam" id="NF001484">
    <property type="entry name" value="PRK00331.1"/>
    <property type="match status" value="1"/>
</dbReference>
<dbReference type="PANTHER" id="PTHR10937">
    <property type="entry name" value="GLUCOSAMINE--FRUCTOSE-6-PHOSPHATE AMINOTRANSFERASE, ISOMERIZING"/>
    <property type="match status" value="1"/>
</dbReference>
<dbReference type="PANTHER" id="PTHR10937:SF0">
    <property type="entry name" value="GLUTAMINE--FRUCTOSE-6-PHOSPHATE TRANSAMINASE (ISOMERIZING)"/>
    <property type="match status" value="1"/>
</dbReference>
<dbReference type="Pfam" id="PF13522">
    <property type="entry name" value="GATase_6"/>
    <property type="match status" value="1"/>
</dbReference>
<dbReference type="Pfam" id="PF01380">
    <property type="entry name" value="SIS"/>
    <property type="match status" value="2"/>
</dbReference>
<dbReference type="SUPFAM" id="SSF56235">
    <property type="entry name" value="N-terminal nucleophile aminohydrolases (Ntn hydrolases)"/>
    <property type="match status" value="1"/>
</dbReference>
<dbReference type="SUPFAM" id="SSF53697">
    <property type="entry name" value="SIS domain"/>
    <property type="match status" value="1"/>
</dbReference>
<dbReference type="PROSITE" id="PS51278">
    <property type="entry name" value="GATASE_TYPE_2"/>
    <property type="match status" value="1"/>
</dbReference>
<dbReference type="PROSITE" id="PS51464">
    <property type="entry name" value="SIS"/>
    <property type="match status" value="2"/>
</dbReference>
<comment type="function">
    <text evidence="1">Catalyzes the first step in hexosamine metabolism, converting fructose-6P into glucosamine-6P using glutamine as a nitrogen source.</text>
</comment>
<comment type="catalytic activity">
    <reaction evidence="1">
        <text>D-fructose 6-phosphate + L-glutamine = D-glucosamine 6-phosphate + L-glutamate</text>
        <dbReference type="Rhea" id="RHEA:13237"/>
        <dbReference type="ChEBI" id="CHEBI:29985"/>
        <dbReference type="ChEBI" id="CHEBI:58359"/>
        <dbReference type="ChEBI" id="CHEBI:58725"/>
        <dbReference type="ChEBI" id="CHEBI:61527"/>
        <dbReference type="EC" id="2.6.1.16"/>
    </reaction>
</comment>
<comment type="subunit">
    <text evidence="1">Homodimer.</text>
</comment>
<comment type="subcellular location">
    <subcellularLocation>
        <location evidence="1">Cytoplasm</location>
    </subcellularLocation>
</comment>
<accession>Q67T12</accession>
<evidence type="ECO:0000255" key="1">
    <source>
        <dbReference type="HAMAP-Rule" id="MF_00164"/>
    </source>
</evidence>
<proteinExistence type="inferred from homology"/>
<name>GLMS_SYMTH</name>
<reference key="1">
    <citation type="journal article" date="2004" name="Nucleic Acids Res.">
        <title>Genome sequence of Symbiobacterium thermophilum, an uncultivable bacterium that depends on microbial commensalism.</title>
        <authorList>
            <person name="Ueda K."/>
            <person name="Yamashita A."/>
            <person name="Ishikawa J."/>
            <person name="Shimada M."/>
            <person name="Watsuji T."/>
            <person name="Morimura K."/>
            <person name="Ikeda H."/>
            <person name="Hattori M."/>
            <person name="Beppu T."/>
        </authorList>
    </citation>
    <scope>NUCLEOTIDE SEQUENCE [LARGE SCALE GENOMIC DNA]</scope>
    <source>
        <strain>DSM 24528 / JCM 14929 / IAM 14863 / T</strain>
    </source>
</reference>
<feature type="initiator methionine" description="Removed" evidence="1">
    <location>
        <position position="1"/>
    </location>
</feature>
<feature type="chain" id="PRO_0000135397" description="Glutamine--fructose-6-phosphate aminotransferase [isomerizing]">
    <location>
        <begin position="2"/>
        <end position="609"/>
    </location>
</feature>
<feature type="domain" description="Glutamine amidotransferase type-2" evidence="1">
    <location>
        <begin position="2"/>
        <end position="217"/>
    </location>
</feature>
<feature type="domain" description="SIS 1" evidence="1">
    <location>
        <begin position="286"/>
        <end position="425"/>
    </location>
</feature>
<feature type="domain" description="SIS 2" evidence="1">
    <location>
        <begin position="458"/>
        <end position="599"/>
    </location>
</feature>
<feature type="active site" description="Nucleophile; for GATase activity" evidence="1">
    <location>
        <position position="2"/>
    </location>
</feature>
<feature type="active site" description="For Fru-6P isomerization activity" evidence="1">
    <location>
        <position position="604"/>
    </location>
</feature>
<protein>
    <recommendedName>
        <fullName evidence="1">Glutamine--fructose-6-phosphate aminotransferase [isomerizing]</fullName>
        <ecNumber evidence="1">2.6.1.16</ecNumber>
    </recommendedName>
    <alternativeName>
        <fullName evidence="1">D-fructose-6-phosphate amidotransferase</fullName>
    </alternativeName>
    <alternativeName>
        <fullName evidence="1">GFAT</fullName>
    </alternativeName>
    <alternativeName>
        <fullName evidence="1">Glucosamine-6-phosphate synthase</fullName>
    </alternativeName>
    <alternativeName>
        <fullName evidence="1">Hexosephosphate aminotransferase</fullName>
    </alternativeName>
    <alternativeName>
        <fullName evidence="1">L-glutamine--D-fructose-6-phosphate amidotransferase</fullName>
    </alternativeName>
</protein>
<gene>
    <name evidence="1" type="primary">glmS</name>
    <name type="ordered locus">STH196</name>
</gene>
<sequence length="609" mass="65839">MCGIVGYIGRREALPVLMDGLQRLEYRGYDSAGVALVAGGRTWVEKRKGRLSDLQTVLGNLPSGCRVGIGHTRWATHGRPSDRNAHPHTDTSGRFAVVHNGIIENYAELRAELERQGCVFRSETDTEVIPHLIASCYDGDLVRAVRRAVPRLRGAYAIAVVCQQEPDKIVAVRAASPLVIGLGEGELLLASDIPALLPYTRQVIVMEEGWLAELTPEGVTLTTVAGEPVQPQVMRVDWEPGQAERGGYAHFMLKEIHEQPRALRDTLTGRLDAATGLVTLSEVGLSAAEVRALRKVAMVACGTAAHAGLVGRYLIERLAGIPVEWDLASEYRYREPLVDEHTLFVAVSQSGETADTLAALREARSRGARVLAVTNVVGSTVAREADWVLYTWAGPEIAVASTKAYSTQVVALTLLAIWLGQQNGRIDPAEASALVSGLQHLPDQAGQTLSLEAAVKEAAEALAGHDDVFFIGRNLDYAVALEAQLKLKEISYIHAEAYAAGELKHGPLALITDGVPVVALNTQPDLAEKTISNIQETRARGAFVLGLAQEGDEETARHCDRIFYLPRTHRLLTPALAVIPMQLLAYYAATARGTDVDKPRNLAKSVTVE</sequence>
<keyword id="KW-0032">Aminotransferase</keyword>
<keyword id="KW-0963">Cytoplasm</keyword>
<keyword id="KW-0315">Glutamine amidotransferase</keyword>
<keyword id="KW-1185">Reference proteome</keyword>
<keyword id="KW-0677">Repeat</keyword>
<keyword id="KW-0808">Transferase</keyword>